<protein>
    <recommendedName>
        <fullName evidence="1">DNA-directed RNA polymerase subunit alpha</fullName>
        <shortName evidence="1">RNAP subunit alpha</shortName>
        <ecNumber evidence="1">2.7.7.6</ecNumber>
    </recommendedName>
    <alternativeName>
        <fullName evidence="1">RNA polymerase subunit alpha</fullName>
    </alternativeName>
    <alternativeName>
        <fullName evidence="1">Transcriptase subunit alpha</fullName>
    </alternativeName>
</protein>
<keyword id="KW-0240">DNA-directed RNA polymerase</keyword>
<keyword id="KW-0548">Nucleotidyltransferase</keyword>
<keyword id="KW-1185">Reference proteome</keyword>
<keyword id="KW-0804">Transcription</keyword>
<keyword id="KW-0808">Transferase</keyword>
<proteinExistence type="inferred from homology"/>
<comment type="function">
    <text evidence="1">DNA-dependent RNA polymerase catalyzes the transcription of DNA into RNA using the four ribonucleoside triphosphates as substrates.</text>
</comment>
<comment type="catalytic activity">
    <reaction evidence="1">
        <text>RNA(n) + a ribonucleoside 5'-triphosphate = RNA(n+1) + diphosphate</text>
        <dbReference type="Rhea" id="RHEA:21248"/>
        <dbReference type="Rhea" id="RHEA-COMP:14527"/>
        <dbReference type="Rhea" id="RHEA-COMP:17342"/>
        <dbReference type="ChEBI" id="CHEBI:33019"/>
        <dbReference type="ChEBI" id="CHEBI:61557"/>
        <dbReference type="ChEBI" id="CHEBI:140395"/>
        <dbReference type="EC" id="2.7.7.6"/>
    </reaction>
</comment>
<comment type="subunit">
    <text evidence="1">Homodimer. The RNAP catalytic core consists of 2 alpha, 1 beta, 1 beta' and 1 omega subunit. When a sigma factor is associated with the core the holoenzyme is formed, which can initiate transcription.</text>
</comment>
<comment type="domain">
    <text evidence="1">The N-terminal domain is essential for RNAP assembly and basal transcription, whereas the C-terminal domain is involved in interaction with transcriptional regulators and with upstream promoter elements.</text>
</comment>
<comment type="similarity">
    <text evidence="1">Belongs to the RNA polymerase alpha chain family.</text>
</comment>
<evidence type="ECO:0000255" key="1">
    <source>
        <dbReference type="HAMAP-Rule" id="MF_00059"/>
    </source>
</evidence>
<organism>
    <name type="scientific">Rhizobium leguminosarum bv. trifolii (strain WSM2304)</name>
    <dbReference type="NCBI Taxonomy" id="395492"/>
    <lineage>
        <taxon>Bacteria</taxon>
        <taxon>Pseudomonadati</taxon>
        <taxon>Pseudomonadota</taxon>
        <taxon>Alphaproteobacteria</taxon>
        <taxon>Hyphomicrobiales</taxon>
        <taxon>Rhizobiaceae</taxon>
        <taxon>Rhizobium/Agrobacterium group</taxon>
        <taxon>Rhizobium</taxon>
    </lineage>
</organism>
<accession>B5ZZ57</accession>
<dbReference type="EC" id="2.7.7.6" evidence="1"/>
<dbReference type="EMBL" id="CP001191">
    <property type="protein sequence ID" value="ACI54650.1"/>
    <property type="molecule type" value="Genomic_DNA"/>
</dbReference>
<dbReference type="RefSeq" id="WP_003547579.1">
    <property type="nucleotide sequence ID" value="NC_011369.1"/>
</dbReference>
<dbReference type="SMR" id="B5ZZ57"/>
<dbReference type="STRING" id="395492.Rleg2_1356"/>
<dbReference type="KEGG" id="rlt:Rleg2_1356"/>
<dbReference type="eggNOG" id="COG0202">
    <property type="taxonomic scope" value="Bacteria"/>
</dbReference>
<dbReference type="HOGENOM" id="CLU_053084_0_0_5"/>
<dbReference type="Proteomes" id="UP000008330">
    <property type="component" value="Chromosome"/>
</dbReference>
<dbReference type="GO" id="GO:0005737">
    <property type="term" value="C:cytoplasm"/>
    <property type="evidence" value="ECO:0007669"/>
    <property type="project" value="UniProtKB-ARBA"/>
</dbReference>
<dbReference type="GO" id="GO:0000428">
    <property type="term" value="C:DNA-directed RNA polymerase complex"/>
    <property type="evidence" value="ECO:0007669"/>
    <property type="project" value="UniProtKB-KW"/>
</dbReference>
<dbReference type="GO" id="GO:0003677">
    <property type="term" value="F:DNA binding"/>
    <property type="evidence" value="ECO:0007669"/>
    <property type="project" value="UniProtKB-UniRule"/>
</dbReference>
<dbReference type="GO" id="GO:0003899">
    <property type="term" value="F:DNA-directed RNA polymerase activity"/>
    <property type="evidence" value="ECO:0007669"/>
    <property type="project" value="UniProtKB-UniRule"/>
</dbReference>
<dbReference type="GO" id="GO:0046983">
    <property type="term" value="F:protein dimerization activity"/>
    <property type="evidence" value="ECO:0007669"/>
    <property type="project" value="InterPro"/>
</dbReference>
<dbReference type="GO" id="GO:0006351">
    <property type="term" value="P:DNA-templated transcription"/>
    <property type="evidence" value="ECO:0007669"/>
    <property type="project" value="UniProtKB-UniRule"/>
</dbReference>
<dbReference type="CDD" id="cd06928">
    <property type="entry name" value="RNAP_alpha_NTD"/>
    <property type="match status" value="1"/>
</dbReference>
<dbReference type="FunFam" id="1.10.150.20:FF:000001">
    <property type="entry name" value="DNA-directed RNA polymerase subunit alpha"/>
    <property type="match status" value="1"/>
</dbReference>
<dbReference type="FunFam" id="2.170.120.12:FF:000001">
    <property type="entry name" value="DNA-directed RNA polymerase subunit alpha"/>
    <property type="match status" value="1"/>
</dbReference>
<dbReference type="Gene3D" id="1.10.150.20">
    <property type="entry name" value="5' to 3' exonuclease, C-terminal subdomain"/>
    <property type="match status" value="1"/>
</dbReference>
<dbReference type="Gene3D" id="2.170.120.12">
    <property type="entry name" value="DNA-directed RNA polymerase, insert domain"/>
    <property type="match status" value="1"/>
</dbReference>
<dbReference type="Gene3D" id="3.30.1360.10">
    <property type="entry name" value="RNA polymerase, RBP11-like subunit"/>
    <property type="match status" value="1"/>
</dbReference>
<dbReference type="HAMAP" id="MF_00059">
    <property type="entry name" value="RNApol_bact_RpoA"/>
    <property type="match status" value="1"/>
</dbReference>
<dbReference type="InterPro" id="IPR011262">
    <property type="entry name" value="DNA-dir_RNA_pol_insert"/>
</dbReference>
<dbReference type="InterPro" id="IPR011263">
    <property type="entry name" value="DNA-dir_RNA_pol_RpoA/D/Rpb3"/>
</dbReference>
<dbReference type="InterPro" id="IPR011773">
    <property type="entry name" value="DNA-dir_RpoA"/>
</dbReference>
<dbReference type="InterPro" id="IPR036603">
    <property type="entry name" value="RBP11-like"/>
</dbReference>
<dbReference type="InterPro" id="IPR011260">
    <property type="entry name" value="RNAP_asu_C"/>
</dbReference>
<dbReference type="InterPro" id="IPR036643">
    <property type="entry name" value="RNApol_insert_sf"/>
</dbReference>
<dbReference type="NCBIfam" id="NF003513">
    <property type="entry name" value="PRK05182.1-2"/>
    <property type="match status" value="1"/>
</dbReference>
<dbReference type="NCBIfam" id="NF003519">
    <property type="entry name" value="PRK05182.2-5"/>
    <property type="match status" value="1"/>
</dbReference>
<dbReference type="NCBIfam" id="TIGR02027">
    <property type="entry name" value="rpoA"/>
    <property type="match status" value="1"/>
</dbReference>
<dbReference type="Pfam" id="PF01000">
    <property type="entry name" value="RNA_pol_A_bac"/>
    <property type="match status" value="1"/>
</dbReference>
<dbReference type="Pfam" id="PF03118">
    <property type="entry name" value="RNA_pol_A_CTD"/>
    <property type="match status" value="1"/>
</dbReference>
<dbReference type="Pfam" id="PF01193">
    <property type="entry name" value="RNA_pol_L"/>
    <property type="match status" value="1"/>
</dbReference>
<dbReference type="SMART" id="SM00662">
    <property type="entry name" value="RPOLD"/>
    <property type="match status" value="1"/>
</dbReference>
<dbReference type="SUPFAM" id="SSF47789">
    <property type="entry name" value="C-terminal domain of RNA polymerase alpha subunit"/>
    <property type="match status" value="1"/>
</dbReference>
<dbReference type="SUPFAM" id="SSF56553">
    <property type="entry name" value="Insert subdomain of RNA polymerase alpha subunit"/>
    <property type="match status" value="1"/>
</dbReference>
<dbReference type="SUPFAM" id="SSF55257">
    <property type="entry name" value="RBP11-like subunits of RNA polymerase"/>
    <property type="match status" value="1"/>
</dbReference>
<name>RPOA_RHILW</name>
<reference key="1">
    <citation type="journal article" date="2010" name="Stand. Genomic Sci.">
        <title>Complete genome sequence of Rhizobium leguminosarum bv trifolii strain WSM2304, an effective microsymbiont of the South American clover Trifolium polymorphum.</title>
        <authorList>
            <person name="Reeve W."/>
            <person name="O'Hara G."/>
            <person name="Chain P."/>
            <person name="Ardley J."/>
            <person name="Brau L."/>
            <person name="Nandesena K."/>
            <person name="Tiwari R."/>
            <person name="Malfatti S."/>
            <person name="Kiss H."/>
            <person name="Lapidus A."/>
            <person name="Copeland A."/>
            <person name="Nolan M."/>
            <person name="Land M."/>
            <person name="Ivanova N."/>
            <person name="Mavromatis K."/>
            <person name="Markowitz V."/>
            <person name="Kyrpides N."/>
            <person name="Melino V."/>
            <person name="Denton M."/>
            <person name="Yates R."/>
            <person name="Howieson J."/>
        </authorList>
    </citation>
    <scope>NUCLEOTIDE SEQUENCE [LARGE SCALE GENOMIC DNA]</scope>
    <source>
        <strain>WSM2304</strain>
    </source>
</reference>
<gene>
    <name evidence="1" type="primary">rpoA</name>
    <name type="ordered locus">Rleg2_1356</name>
</gene>
<sequence>MIQKNWQELIKPNKVEFSSSSRTRATLVAEPLERGFGLTLGNALRRVLLSSLRGAAVTAVQIDGVLHEFSSIPGVREDVTDIVLNIKEIAIKMDGDDAKRMVVRKQGPGVVTAGDIQTVGDIEILNPEHVICTLDEGAEIRMEFTVNNGKGYVPAERNRAEDAPIGLIPVDSLYSPVKKVSYKVENTREGQVLDYDKLNMTIETDGSITGEDAVAFAARILQDQLGVFVNFDEPQKETEEEAVTELAFNPALLKKVDELELSVRSANCLKNDNIVYIGDLIQKTEAEMLRTPNFGRKSLNEIKEVLASMGLHLGMEVPAWPPENIEDLAKRYEDQY</sequence>
<feature type="chain" id="PRO_1000091965" description="DNA-directed RNA polymerase subunit alpha">
    <location>
        <begin position="1"/>
        <end position="336"/>
    </location>
</feature>
<feature type="region of interest" description="Alpha N-terminal domain (alpha-NTD)" evidence="1">
    <location>
        <begin position="1"/>
        <end position="232"/>
    </location>
</feature>
<feature type="region of interest" description="Alpha C-terminal domain (alpha-CTD)" evidence="1">
    <location>
        <begin position="248"/>
        <end position="336"/>
    </location>
</feature>